<evidence type="ECO:0000255" key="1">
    <source>
        <dbReference type="HAMAP-Rule" id="MF_00111"/>
    </source>
</evidence>
<proteinExistence type="inferred from homology"/>
<dbReference type="EC" id="2.5.1.7" evidence="1"/>
<dbReference type="EMBL" id="CP000390">
    <property type="protein sequence ID" value="ABG61597.1"/>
    <property type="molecule type" value="Genomic_DNA"/>
</dbReference>
<dbReference type="SMR" id="Q11LX8"/>
<dbReference type="STRING" id="266779.Meso_0192"/>
<dbReference type="KEGG" id="mes:Meso_0192"/>
<dbReference type="eggNOG" id="COG0766">
    <property type="taxonomic scope" value="Bacteria"/>
</dbReference>
<dbReference type="HOGENOM" id="CLU_027387_0_0_5"/>
<dbReference type="OrthoDB" id="9803760at2"/>
<dbReference type="UniPathway" id="UPA00219"/>
<dbReference type="GO" id="GO:0005737">
    <property type="term" value="C:cytoplasm"/>
    <property type="evidence" value="ECO:0007669"/>
    <property type="project" value="UniProtKB-SubCell"/>
</dbReference>
<dbReference type="GO" id="GO:0008760">
    <property type="term" value="F:UDP-N-acetylglucosamine 1-carboxyvinyltransferase activity"/>
    <property type="evidence" value="ECO:0007669"/>
    <property type="project" value="UniProtKB-UniRule"/>
</dbReference>
<dbReference type="GO" id="GO:0051301">
    <property type="term" value="P:cell division"/>
    <property type="evidence" value="ECO:0007669"/>
    <property type="project" value="UniProtKB-KW"/>
</dbReference>
<dbReference type="GO" id="GO:0071555">
    <property type="term" value="P:cell wall organization"/>
    <property type="evidence" value="ECO:0007669"/>
    <property type="project" value="UniProtKB-KW"/>
</dbReference>
<dbReference type="GO" id="GO:0009252">
    <property type="term" value="P:peptidoglycan biosynthetic process"/>
    <property type="evidence" value="ECO:0007669"/>
    <property type="project" value="UniProtKB-UniRule"/>
</dbReference>
<dbReference type="GO" id="GO:0008360">
    <property type="term" value="P:regulation of cell shape"/>
    <property type="evidence" value="ECO:0007669"/>
    <property type="project" value="UniProtKB-KW"/>
</dbReference>
<dbReference type="GO" id="GO:0019277">
    <property type="term" value="P:UDP-N-acetylgalactosamine biosynthetic process"/>
    <property type="evidence" value="ECO:0007669"/>
    <property type="project" value="InterPro"/>
</dbReference>
<dbReference type="CDD" id="cd01555">
    <property type="entry name" value="UdpNAET"/>
    <property type="match status" value="1"/>
</dbReference>
<dbReference type="FunFam" id="3.65.10.10:FF:000001">
    <property type="entry name" value="UDP-N-acetylglucosamine 1-carboxyvinyltransferase"/>
    <property type="match status" value="1"/>
</dbReference>
<dbReference type="Gene3D" id="3.65.10.10">
    <property type="entry name" value="Enolpyruvate transferase domain"/>
    <property type="match status" value="2"/>
</dbReference>
<dbReference type="HAMAP" id="MF_00111">
    <property type="entry name" value="MurA"/>
    <property type="match status" value="1"/>
</dbReference>
<dbReference type="InterPro" id="IPR001986">
    <property type="entry name" value="Enolpyruvate_Tfrase_dom"/>
</dbReference>
<dbReference type="InterPro" id="IPR036968">
    <property type="entry name" value="Enolpyruvate_Tfrase_sf"/>
</dbReference>
<dbReference type="InterPro" id="IPR050068">
    <property type="entry name" value="MurA_subfamily"/>
</dbReference>
<dbReference type="InterPro" id="IPR013792">
    <property type="entry name" value="RNA3'P_cycl/enolpyr_Trfase_a/b"/>
</dbReference>
<dbReference type="InterPro" id="IPR005750">
    <property type="entry name" value="UDP_GlcNAc_COvinyl_MurA"/>
</dbReference>
<dbReference type="NCBIfam" id="TIGR01072">
    <property type="entry name" value="murA"/>
    <property type="match status" value="1"/>
</dbReference>
<dbReference type="NCBIfam" id="NF006873">
    <property type="entry name" value="PRK09369.1"/>
    <property type="match status" value="1"/>
</dbReference>
<dbReference type="PANTHER" id="PTHR43783">
    <property type="entry name" value="UDP-N-ACETYLGLUCOSAMINE 1-CARBOXYVINYLTRANSFERASE"/>
    <property type="match status" value="1"/>
</dbReference>
<dbReference type="PANTHER" id="PTHR43783:SF1">
    <property type="entry name" value="UDP-N-ACETYLGLUCOSAMINE 1-CARBOXYVINYLTRANSFERASE"/>
    <property type="match status" value="1"/>
</dbReference>
<dbReference type="Pfam" id="PF00275">
    <property type="entry name" value="EPSP_synthase"/>
    <property type="match status" value="1"/>
</dbReference>
<dbReference type="SUPFAM" id="SSF55205">
    <property type="entry name" value="EPT/RTPC-like"/>
    <property type="match status" value="1"/>
</dbReference>
<gene>
    <name evidence="1" type="primary">murA</name>
    <name type="ordered locus">Meso_0192</name>
</gene>
<sequence length="429" mass="45755">MDRIRIRGGSELNGTIPISGAKNAALPLMIASLLTDDTLTLENVPHLADVEQLIRILGNHGVDYSVNGRRENQDKGYSRTVHFTARSIVDTTAPYELVSKMRASFWVIGPLLARMGEAKVSLPGGCAIGTRPVDLFIEGLRSLGAAIDIEGGYVIARAKDGLVGTRFRFPKVSVGATHVLMMAASLARGQTVLENAAREPEIVNLADCLNAMGAKISGAGTPTITIEGVTSLSGARHRIIPDRIETGTYALAVAMAGGDVMLEGARADLLETALDVIQQTGAEITRADTGIRIRRNGNGISPVDITTEPFPGFPTDLQAQFMAVMTKAKGNSRITETIFENRFMHVQELARLGARISLSGQEAVVEGVDRLKGAPVMATDLRASVSLLIAGLAAEGETTVNRVYHLDRGFERLEEKLSSCGADIERISG</sequence>
<accession>Q11LX8</accession>
<organism>
    <name type="scientific">Chelativorans sp. (strain BNC1)</name>
    <dbReference type="NCBI Taxonomy" id="266779"/>
    <lineage>
        <taxon>Bacteria</taxon>
        <taxon>Pseudomonadati</taxon>
        <taxon>Pseudomonadota</taxon>
        <taxon>Alphaproteobacteria</taxon>
        <taxon>Hyphomicrobiales</taxon>
        <taxon>Phyllobacteriaceae</taxon>
        <taxon>Chelativorans</taxon>
    </lineage>
</organism>
<comment type="function">
    <text evidence="1">Cell wall formation. Adds enolpyruvyl to UDP-N-acetylglucosamine.</text>
</comment>
<comment type="catalytic activity">
    <reaction evidence="1">
        <text>phosphoenolpyruvate + UDP-N-acetyl-alpha-D-glucosamine = UDP-N-acetyl-3-O-(1-carboxyvinyl)-alpha-D-glucosamine + phosphate</text>
        <dbReference type="Rhea" id="RHEA:18681"/>
        <dbReference type="ChEBI" id="CHEBI:43474"/>
        <dbReference type="ChEBI" id="CHEBI:57705"/>
        <dbReference type="ChEBI" id="CHEBI:58702"/>
        <dbReference type="ChEBI" id="CHEBI:68483"/>
        <dbReference type="EC" id="2.5.1.7"/>
    </reaction>
</comment>
<comment type="pathway">
    <text evidence="1">Cell wall biogenesis; peptidoglycan biosynthesis.</text>
</comment>
<comment type="subcellular location">
    <subcellularLocation>
        <location evidence="1">Cytoplasm</location>
    </subcellularLocation>
</comment>
<comment type="similarity">
    <text evidence="1">Belongs to the EPSP synthase family. MurA subfamily.</text>
</comment>
<feature type="chain" id="PRO_1000023055" description="UDP-N-acetylglucosamine 1-carboxyvinyltransferase">
    <location>
        <begin position="1"/>
        <end position="429"/>
    </location>
</feature>
<feature type="active site" description="Proton donor" evidence="1">
    <location>
        <position position="126"/>
    </location>
</feature>
<feature type="binding site" evidence="1">
    <location>
        <begin position="22"/>
        <end position="23"/>
    </location>
    <ligand>
        <name>phosphoenolpyruvate</name>
        <dbReference type="ChEBI" id="CHEBI:58702"/>
    </ligand>
</feature>
<feature type="binding site" evidence="1">
    <location>
        <position position="102"/>
    </location>
    <ligand>
        <name>UDP-N-acetyl-alpha-D-glucosamine</name>
        <dbReference type="ChEBI" id="CHEBI:57705"/>
    </ligand>
</feature>
<feature type="binding site" evidence="1">
    <location>
        <begin position="131"/>
        <end position="135"/>
    </location>
    <ligand>
        <name>UDP-N-acetyl-alpha-D-glucosamine</name>
        <dbReference type="ChEBI" id="CHEBI:57705"/>
    </ligand>
</feature>
<feature type="binding site" evidence="1">
    <location>
        <begin position="171"/>
        <end position="174"/>
    </location>
    <ligand>
        <name>UDP-N-acetyl-alpha-D-glucosamine</name>
        <dbReference type="ChEBI" id="CHEBI:57705"/>
    </ligand>
</feature>
<feature type="binding site" evidence="1">
    <location>
        <position position="316"/>
    </location>
    <ligand>
        <name>UDP-N-acetyl-alpha-D-glucosamine</name>
        <dbReference type="ChEBI" id="CHEBI:57705"/>
    </ligand>
</feature>
<feature type="binding site" evidence="1">
    <location>
        <position position="338"/>
    </location>
    <ligand>
        <name>UDP-N-acetyl-alpha-D-glucosamine</name>
        <dbReference type="ChEBI" id="CHEBI:57705"/>
    </ligand>
</feature>
<feature type="modified residue" description="2-(S-cysteinyl)pyruvic acid O-phosphothioketal" evidence="1">
    <location>
        <position position="126"/>
    </location>
</feature>
<name>MURA_CHESB</name>
<protein>
    <recommendedName>
        <fullName evidence="1">UDP-N-acetylglucosamine 1-carboxyvinyltransferase</fullName>
        <ecNumber evidence="1">2.5.1.7</ecNumber>
    </recommendedName>
    <alternativeName>
        <fullName evidence="1">Enoylpyruvate transferase</fullName>
    </alternativeName>
    <alternativeName>
        <fullName evidence="1">UDP-N-acetylglucosamine enolpyruvyl transferase</fullName>
        <shortName evidence="1">EPT</shortName>
    </alternativeName>
</protein>
<keyword id="KW-0131">Cell cycle</keyword>
<keyword id="KW-0132">Cell division</keyword>
<keyword id="KW-0133">Cell shape</keyword>
<keyword id="KW-0961">Cell wall biogenesis/degradation</keyword>
<keyword id="KW-0963">Cytoplasm</keyword>
<keyword id="KW-0573">Peptidoglycan synthesis</keyword>
<keyword id="KW-0670">Pyruvate</keyword>
<keyword id="KW-0808">Transferase</keyword>
<reference key="1">
    <citation type="submission" date="2006-06" db="EMBL/GenBank/DDBJ databases">
        <title>Complete sequence of chromosome of Mesorhizobium sp. BNC1.</title>
        <authorList>
            <consortium name="US DOE Joint Genome Institute"/>
            <person name="Copeland A."/>
            <person name="Lucas S."/>
            <person name="Lapidus A."/>
            <person name="Barry K."/>
            <person name="Detter J.C."/>
            <person name="Glavina del Rio T."/>
            <person name="Hammon N."/>
            <person name="Israni S."/>
            <person name="Dalin E."/>
            <person name="Tice H."/>
            <person name="Pitluck S."/>
            <person name="Chertkov O."/>
            <person name="Brettin T."/>
            <person name="Bruce D."/>
            <person name="Han C."/>
            <person name="Tapia R."/>
            <person name="Gilna P."/>
            <person name="Schmutz J."/>
            <person name="Larimer F."/>
            <person name="Land M."/>
            <person name="Hauser L."/>
            <person name="Kyrpides N."/>
            <person name="Mikhailova N."/>
            <person name="Richardson P."/>
        </authorList>
    </citation>
    <scope>NUCLEOTIDE SEQUENCE [LARGE SCALE GENOMIC DNA]</scope>
    <source>
        <strain>BNC1</strain>
    </source>
</reference>